<organism>
    <name type="scientific">Escherichia coli (strain 55989 / EAEC)</name>
    <dbReference type="NCBI Taxonomy" id="585055"/>
    <lineage>
        <taxon>Bacteria</taxon>
        <taxon>Pseudomonadati</taxon>
        <taxon>Pseudomonadota</taxon>
        <taxon>Gammaproteobacteria</taxon>
        <taxon>Enterobacterales</taxon>
        <taxon>Enterobacteriaceae</taxon>
        <taxon>Escherichia</taxon>
    </lineage>
</organism>
<dbReference type="EC" id="2.1.-.-" evidence="1"/>
<dbReference type="EMBL" id="CU928145">
    <property type="protein sequence ID" value="CAU97019.1"/>
    <property type="molecule type" value="Genomic_DNA"/>
</dbReference>
<dbReference type="RefSeq" id="WP_001070350.1">
    <property type="nucleotide sequence ID" value="NC_011748.1"/>
</dbReference>
<dbReference type="GeneID" id="93776367"/>
<dbReference type="KEGG" id="eck:EC55989_1160"/>
<dbReference type="HOGENOM" id="CLU_036182_2_0_6"/>
<dbReference type="UniPathway" id="UPA00637"/>
<dbReference type="Proteomes" id="UP000000746">
    <property type="component" value="Chromosome"/>
</dbReference>
<dbReference type="GO" id="GO:0005886">
    <property type="term" value="C:plasma membrane"/>
    <property type="evidence" value="ECO:0007669"/>
    <property type="project" value="UniProtKB-SubCell"/>
</dbReference>
<dbReference type="GO" id="GO:0016747">
    <property type="term" value="F:acyltransferase activity, transferring groups other than amino-acyl groups"/>
    <property type="evidence" value="ECO:0007669"/>
    <property type="project" value="InterPro"/>
</dbReference>
<dbReference type="GO" id="GO:0016741">
    <property type="term" value="F:transferase activity, transferring one-carbon groups"/>
    <property type="evidence" value="ECO:0007669"/>
    <property type="project" value="UniProtKB-UniRule"/>
</dbReference>
<dbReference type="GO" id="GO:0009250">
    <property type="term" value="P:glucan biosynthetic process"/>
    <property type="evidence" value="ECO:0007669"/>
    <property type="project" value="UniProtKB-UniRule"/>
</dbReference>
<dbReference type="HAMAP" id="MF_01066">
    <property type="entry name" value="MdoC_OpgC"/>
    <property type="match status" value="1"/>
</dbReference>
<dbReference type="InterPro" id="IPR002656">
    <property type="entry name" value="Acyl_transf_3_dom"/>
</dbReference>
<dbReference type="InterPro" id="IPR050623">
    <property type="entry name" value="Glucan_succinyl_AcylTrfase"/>
</dbReference>
<dbReference type="InterPro" id="IPR023723">
    <property type="entry name" value="Glucans_biosynth_C"/>
</dbReference>
<dbReference type="NCBIfam" id="NF003014">
    <property type="entry name" value="PRK03854.1"/>
    <property type="match status" value="1"/>
</dbReference>
<dbReference type="PANTHER" id="PTHR36927">
    <property type="entry name" value="BLR4337 PROTEIN"/>
    <property type="match status" value="1"/>
</dbReference>
<dbReference type="PANTHER" id="PTHR36927:SF3">
    <property type="entry name" value="GLUCANS BIOSYNTHESIS PROTEIN C"/>
    <property type="match status" value="1"/>
</dbReference>
<dbReference type="Pfam" id="PF01757">
    <property type="entry name" value="Acyl_transf_3"/>
    <property type="match status" value="1"/>
</dbReference>
<proteinExistence type="inferred from homology"/>
<feature type="chain" id="PRO_1000149736" description="Glucans biosynthesis protein C">
    <location>
        <begin position="1"/>
        <end position="385"/>
    </location>
</feature>
<feature type="transmembrane region" description="Helical" evidence="1">
    <location>
        <begin position="17"/>
        <end position="37"/>
    </location>
</feature>
<feature type="transmembrane region" description="Helical" evidence="1">
    <location>
        <begin position="60"/>
        <end position="80"/>
    </location>
</feature>
<feature type="transmembrane region" description="Helical" evidence="1">
    <location>
        <begin position="91"/>
        <end position="111"/>
    </location>
</feature>
<feature type="transmembrane region" description="Helical" evidence="1">
    <location>
        <begin position="137"/>
        <end position="157"/>
    </location>
</feature>
<feature type="transmembrane region" description="Helical" evidence="1">
    <location>
        <begin position="173"/>
        <end position="193"/>
    </location>
</feature>
<feature type="transmembrane region" description="Helical" evidence="1">
    <location>
        <begin position="212"/>
        <end position="232"/>
    </location>
</feature>
<feature type="transmembrane region" description="Helical" evidence="1">
    <location>
        <begin position="239"/>
        <end position="259"/>
    </location>
</feature>
<feature type="transmembrane region" description="Helical" evidence="1">
    <location>
        <begin position="274"/>
        <end position="294"/>
    </location>
</feature>
<feature type="transmembrane region" description="Helical" evidence="1">
    <location>
        <begin position="311"/>
        <end position="331"/>
    </location>
</feature>
<feature type="transmembrane region" description="Helical" evidence="1">
    <location>
        <begin position="338"/>
        <end position="358"/>
    </location>
</feature>
<name>OPGC_ECO55</name>
<gene>
    <name evidence="1" type="primary">mdoC</name>
    <name evidence="1" type="synonym">opgC</name>
    <name type="ordered locus">EC55989_1160</name>
</gene>
<sequence>MNPVPAQREYFLDSIRAWLMLLGIPFHISLIYSSHTWHVNSAEPSLWLTLFNDFIHSFRMQVFFVISGYFSYMLFLRYPLKKWWKVRVERVGIPMLTAIPLLTLPQFIMLQYVKGKAESWPGLSLYDKYNTLAWELISHLWFLLVLVVMTTLCVWIFKRIRNNLENSDKTNKKFSMVKLSVIFLCLGIGYAVIRRTIFIVYPPILSNGMFNFIVMQTLFYLPFFILGALAFIFPHLKALFTTPSRGCTLAAALAFVAYLLNQRYGSGDAWMYETESVITMVLGLWMVNVVFSFGHRLLNFQSARVTYFVNASLFIYLVHHPLTLFFGAYITPHITSNWLGFLCGLIFVVGIAIILYEIHLRIPLLKFLFSGKPVVKRENDKAPAR</sequence>
<accession>B7LFF7</accession>
<evidence type="ECO:0000255" key="1">
    <source>
        <dbReference type="HAMAP-Rule" id="MF_01066"/>
    </source>
</evidence>
<protein>
    <recommendedName>
        <fullName evidence="1">Glucans biosynthesis protein C</fullName>
        <ecNumber evidence="1">2.1.-.-</ecNumber>
    </recommendedName>
</protein>
<reference key="1">
    <citation type="journal article" date="2009" name="PLoS Genet.">
        <title>Organised genome dynamics in the Escherichia coli species results in highly diverse adaptive paths.</title>
        <authorList>
            <person name="Touchon M."/>
            <person name="Hoede C."/>
            <person name="Tenaillon O."/>
            <person name="Barbe V."/>
            <person name="Baeriswyl S."/>
            <person name="Bidet P."/>
            <person name="Bingen E."/>
            <person name="Bonacorsi S."/>
            <person name="Bouchier C."/>
            <person name="Bouvet O."/>
            <person name="Calteau A."/>
            <person name="Chiapello H."/>
            <person name="Clermont O."/>
            <person name="Cruveiller S."/>
            <person name="Danchin A."/>
            <person name="Diard M."/>
            <person name="Dossat C."/>
            <person name="Karoui M.E."/>
            <person name="Frapy E."/>
            <person name="Garry L."/>
            <person name="Ghigo J.M."/>
            <person name="Gilles A.M."/>
            <person name="Johnson J."/>
            <person name="Le Bouguenec C."/>
            <person name="Lescat M."/>
            <person name="Mangenot S."/>
            <person name="Martinez-Jehanne V."/>
            <person name="Matic I."/>
            <person name="Nassif X."/>
            <person name="Oztas S."/>
            <person name="Petit M.A."/>
            <person name="Pichon C."/>
            <person name="Rouy Z."/>
            <person name="Ruf C.S."/>
            <person name="Schneider D."/>
            <person name="Tourret J."/>
            <person name="Vacherie B."/>
            <person name="Vallenet D."/>
            <person name="Medigue C."/>
            <person name="Rocha E.P.C."/>
            <person name="Denamur E."/>
        </authorList>
    </citation>
    <scope>NUCLEOTIDE SEQUENCE [LARGE SCALE GENOMIC DNA]</scope>
    <source>
        <strain>55989 / EAEC</strain>
    </source>
</reference>
<comment type="function">
    <text evidence="1">Necessary for the succinyl substitution of periplasmic glucans. Could catalyze the transfer of succinyl residues from the cytoplasmic side of the membrane to the nascent glucan backbones on the periplasmic side of the membrane.</text>
</comment>
<comment type="pathway">
    <text evidence="1">Glycan metabolism; osmoregulated periplasmic glucan (OPG) biosynthesis.</text>
</comment>
<comment type="subcellular location">
    <subcellularLocation>
        <location evidence="1">Cell membrane</location>
        <topology evidence="1">Multi-pass membrane protein</topology>
    </subcellularLocation>
</comment>
<comment type="similarity">
    <text evidence="1">Belongs to the acyltransferase 3 family. OpgC subfamily.</text>
</comment>
<keyword id="KW-0012">Acyltransferase</keyword>
<keyword id="KW-1003">Cell membrane</keyword>
<keyword id="KW-0472">Membrane</keyword>
<keyword id="KW-1185">Reference proteome</keyword>
<keyword id="KW-0808">Transferase</keyword>
<keyword id="KW-0812">Transmembrane</keyword>
<keyword id="KW-1133">Transmembrane helix</keyword>